<feature type="initiator methionine" description="Removed" evidence="1 4">
    <location>
        <position position="1"/>
    </location>
</feature>
<feature type="chain" id="PRO_0000052945" description="Hemoglobin subunit beta">
    <location>
        <begin position="2"/>
        <end position="147"/>
    </location>
</feature>
<feature type="domain" description="Globin" evidence="3">
    <location>
        <begin position="3"/>
        <end position="147"/>
    </location>
</feature>
<feature type="binding site" description="distal binding residue">
    <location>
        <position position="64"/>
    </location>
    <ligand>
        <name>heme b</name>
        <dbReference type="ChEBI" id="CHEBI:60344"/>
    </ligand>
    <ligandPart>
        <name>Fe</name>
        <dbReference type="ChEBI" id="CHEBI:18248"/>
    </ligandPart>
</feature>
<feature type="binding site" description="proximal binding residue">
    <location>
        <position position="93"/>
    </location>
    <ligand>
        <name>heme b</name>
        <dbReference type="ChEBI" id="CHEBI:60344"/>
    </ligand>
    <ligandPart>
        <name>Fe</name>
        <dbReference type="ChEBI" id="CHEBI:18248"/>
    </ligandPart>
</feature>
<feature type="modified residue" description="N-acetylvaline" evidence="1">
    <location>
        <position position="2"/>
    </location>
</feature>
<feature type="modified residue" description="Phosphoserine" evidence="2">
    <location>
        <position position="45"/>
    </location>
</feature>
<feature type="modified residue" description="N6-acetyllysine" evidence="2">
    <location>
        <position position="60"/>
    </location>
</feature>
<feature type="modified residue" description="N6-acetyllysine" evidence="2">
    <location>
        <position position="83"/>
    </location>
</feature>
<feature type="modified residue" description="S-nitrosocysteine" evidence="2">
    <location>
        <position position="94"/>
    </location>
</feature>
<feature type="modified residue" description="N6-acetyllysine" evidence="2">
    <location>
        <position position="145"/>
    </location>
</feature>
<feature type="sequence conflict" description="In Ref. 2; AA sequence." evidence="5" ref="2">
    <original>C</original>
    <variation>H</variation>
    <location>
        <position position="24"/>
    </location>
</feature>
<feature type="sequence conflict" description="In Ref. 2; AA sequence." evidence="5" ref="2">
    <original>K</original>
    <variation>R</variation>
    <location>
        <position position="105"/>
    </location>
</feature>
<feature type="sequence conflict" description="In Ref. 2; AA sequence." evidence="5" ref="2">
    <original>L</original>
    <variation>M</variation>
    <location>
        <position position="115"/>
    </location>
</feature>
<feature type="sequence conflict" description="In Ref. 2; AA sequence." evidence="5" ref="2">
    <original>WH</original>
    <variation>HW</variation>
    <location>
        <begin position="125"/>
        <end position="126"/>
    </location>
</feature>
<feature type="sequence conflict" description="In Ref. 2; AA sequence." evidence="5" ref="2">
    <original>K</original>
    <variation>R</variation>
    <location>
        <position position="133"/>
    </location>
</feature>
<dbReference type="EMBL" id="DQ091213">
    <property type="protein sequence ID" value="AAZ22684.1"/>
    <property type="molecule type" value="Genomic_DNA"/>
</dbReference>
<dbReference type="PIR" id="A02403">
    <property type="entry name" value="HBDN"/>
</dbReference>
<dbReference type="SMR" id="P02087"/>
<dbReference type="HOGENOM" id="CLU_003827_10_0_1"/>
<dbReference type="TreeFam" id="TF333268"/>
<dbReference type="GO" id="GO:0072562">
    <property type="term" value="C:blood microparticle"/>
    <property type="evidence" value="ECO:0007669"/>
    <property type="project" value="TreeGrafter"/>
</dbReference>
<dbReference type="GO" id="GO:0031838">
    <property type="term" value="C:haptoglobin-hemoglobin complex"/>
    <property type="evidence" value="ECO:0007669"/>
    <property type="project" value="TreeGrafter"/>
</dbReference>
<dbReference type="GO" id="GO:0005833">
    <property type="term" value="C:hemoglobin complex"/>
    <property type="evidence" value="ECO:0007669"/>
    <property type="project" value="InterPro"/>
</dbReference>
<dbReference type="GO" id="GO:0031720">
    <property type="term" value="F:haptoglobin binding"/>
    <property type="evidence" value="ECO:0007669"/>
    <property type="project" value="TreeGrafter"/>
</dbReference>
<dbReference type="GO" id="GO:0020037">
    <property type="term" value="F:heme binding"/>
    <property type="evidence" value="ECO:0007669"/>
    <property type="project" value="InterPro"/>
</dbReference>
<dbReference type="GO" id="GO:0031721">
    <property type="term" value="F:hemoglobin alpha binding"/>
    <property type="evidence" value="ECO:0007669"/>
    <property type="project" value="TreeGrafter"/>
</dbReference>
<dbReference type="GO" id="GO:0046872">
    <property type="term" value="F:metal ion binding"/>
    <property type="evidence" value="ECO:0007669"/>
    <property type="project" value="UniProtKB-KW"/>
</dbReference>
<dbReference type="GO" id="GO:0043177">
    <property type="term" value="F:organic acid binding"/>
    <property type="evidence" value="ECO:0007669"/>
    <property type="project" value="TreeGrafter"/>
</dbReference>
<dbReference type="GO" id="GO:0019825">
    <property type="term" value="F:oxygen binding"/>
    <property type="evidence" value="ECO:0007669"/>
    <property type="project" value="InterPro"/>
</dbReference>
<dbReference type="GO" id="GO:0005344">
    <property type="term" value="F:oxygen carrier activity"/>
    <property type="evidence" value="ECO:0007669"/>
    <property type="project" value="UniProtKB-KW"/>
</dbReference>
<dbReference type="GO" id="GO:0004601">
    <property type="term" value="F:peroxidase activity"/>
    <property type="evidence" value="ECO:0007669"/>
    <property type="project" value="TreeGrafter"/>
</dbReference>
<dbReference type="GO" id="GO:0042744">
    <property type="term" value="P:hydrogen peroxide catabolic process"/>
    <property type="evidence" value="ECO:0007669"/>
    <property type="project" value="TreeGrafter"/>
</dbReference>
<dbReference type="CDD" id="cd08925">
    <property type="entry name" value="Hb-beta-like"/>
    <property type="match status" value="1"/>
</dbReference>
<dbReference type="FunFam" id="1.10.490.10:FF:000001">
    <property type="entry name" value="Hemoglobin subunit beta"/>
    <property type="match status" value="1"/>
</dbReference>
<dbReference type="Gene3D" id="1.10.490.10">
    <property type="entry name" value="Globins"/>
    <property type="match status" value="1"/>
</dbReference>
<dbReference type="InterPro" id="IPR000971">
    <property type="entry name" value="Globin"/>
</dbReference>
<dbReference type="InterPro" id="IPR009050">
    <property type="entry name" value="Globin-like_sf"/>
</dbReference>
<dbReference type="InterPro" id="IPR012292">
    <property type="entry name" value="Globin/Proto"/>
</dbReference>
<dbReference type="InterPro" id="IPR002337">
    <property type="entry name" value="Hemoglobin_b"/>
</dbReference>
<dbReference type="InterPro" id="IPR050056">
    <property type="entry name" value="Hemoglobin_oxygen_transport"/>
</dbReference>
<dbReference type="PANTHER" id="PTHR11442">
    <property type="entry name" value="HEMOGLOBIN FAMILY MEMBER"/>
    <property type="match status" value="1"/>
</dbReference>
<dbReference type="PANTHER" id="PTHR11442:SF42">
    <property type="entry name" value="HEMOGLOBIN SUBUNIT BETA"/>
    <property type="match status" value="1"/>
</dbReference>
<dbReference type="Pfam" id="PF00042">
    <property type="entry name" value="Globin"/>
    <property type="match status" value="1"/>
</dbReference>
<dbReference type="PRINTS" id="PR00814">
    <property type="entry name" value="BETAHAEM"/>
</dbReference>
<dbReference type="SUPFAM" id="SSF46458">
    <property type="entry name" value="Globin-like"/>
    <property type="match status" value="1"/>
</dbReference>
<dbReference type="PROSITE" id="PS01033">
    <property type="entry name" value="GLOBIN"/>
    <property type="match status" value="1"/>
</dbReference>
<name>HBB_DASNO</name>
<organism>
    <name type="scientific">Dasypus novemcinctus</name>
    <name type="common">Nine-banded armadillo</name>
    <dbReference type="NCBI Taxonomy" id="9361"/>
    <lineage>
        <taxon>Eukaryota</taxon>
        <taxon>Metazoa</taxon>
        <taxon>Chordata</taxon>
        <taxon>Craniata</taxon>
        <taxon>Vertebrata</taxon>
        <taxon>Euteleostomi</taxon>
        <taxon>Mammalia</taxon>
        <taxon>Eutheria</taxon>
        <taxon>Xenarthra</taxon>
        <taxon>Cingulata</taxon>
        <taxon>Dasypodidae</taxon>
        <taxon>Dasypus</taxon>
    </lineage>
</organism>
<sequence length="147" mass="16351">MVNLTSDEKTAVLALWNKVDVEDCGGEALGRLLVVYPWTQRFFESFGDLSTPAAVFANAKVKAHGKKVLTSFGEGMNHLDNLKGTFAKLSELHCDKLHVDPENFKLLGNMLVVVLARHFGKEFDWHMHACFQKVVAGVANALAHKYH</sequence>
<keyword id="KW-0007">Acetylation</keyword>
<keyword id="KW-0903">Direct protein sequencing</keyword>
<keyword id="KW-0349">Heme</keyword>
<keyword id="KW-0408">Iron</keyword>
<keyword id="KW-0479">Metal-binding</keyword>
<keyword id="KW-0561">Oxygen transport</keyword>
<keyword id="KW-0597">Phosphoprotein</keyword>
<keyword id="KW-0702">S-nitrosylation</keyword>
<keyword id="KW-0813">Transport</keyword>
<evidence type="ECO:0000250" key="1">
    <source>
        <dbReference type="UniProtKB" id="P02086"/>
    </source>
</evidence>
<evidence type="ECO:0000250" key="2">
    <source>
        <dbReference type="UniProtKB" id="P68871"/>
    </source>
</evidence>
<evidence type="ECO:0000255" key="3">
    <source>
        <dbReference type="PROSITE-ProRule" id="PRU00238"/>
    </source>
</evidence>
<evidence type="ECO:0000269" key="4">
    <source>
    </source>
</evidence>
<evidence type="ECO:0000305" key="5"/>
<gene>
    <name type="primary">HBB</name>
</gene>
<reference key="1">
    <citation type="submission" date="2005-06" db="EMBL/GenBank/DDBJ databases">
        <title>Atypical molecular evolution of afrotherian and xenarthran beta-globin cluster genes.</title>
        <authorList>
            <person name="Sloan A.M."/>
            <person name="Campbell K.L."/>
        </authorList>
    </citation>
    <scope>NUCLEOTIDE SEQUENCE [GENOMIC DNA]</scope>
</reference>
<reference key="2">
    <citation type="journal article" date="1981" name="Biochim. Biophys. Acta">
        <title>Primary structure of the major beta-chain of armadillo (Dasypus novemcinctus) haemoglobin.</title>
        <authorList>
            <person name="de Jong W.W."/>
            <person name="Leunissen J.A.M."/>
            <person name="Cuijpers H.T."/>
        </authorList>
    </citation>
    <scope>PROTEIN SEQUENCE OF 2-147</scope>
</reference>
<accession>P02087</accession>
<accession>Q45XI0</accession>
<protein>
    <recommendedName>
        <fullName>Hemoglobin subunit beta</fullName>
    </recommendedName>
    <alternativeName>
        <fullName>Beta-globin</fullName>
    </alternativeName>
    <alternativeName>
        <fullName>Hemoglobin beta chain</fullName>
    </alternativeName>
</protein>
<comment type="function">
    <text>Involved in oxygen transport from the lung to the various peripheral tissues.</text>
</comment>
<comment type="subunit">
    <text>Heterotetramer of two alpha chains and two beta chains.</text>
</comment>
<comment type="tissue specificity">
    <text>Red blood cells.</text>
</comment>
<comment type="similarity">
    <text evidence="3">Belongs to the globin family.</text>
</comment>
<proteinExistence type="evidence at protein level"/>